<keyword id="KW-0031">Aminopeptidase</keyword>
<keyword id="KW-0325">Glycoprotein</keyword>
<keyword id="KW-0378">Hydrolase</keyword>
<keyword id="KW-0645">Protease</keyword>
<keyword id="KW-1185">Reference proteome</keyword>
<keyword id="KW-0964">Secreted</keyword>
<keyword id="KW-0720">Serine protease</keyword>
<keyword id="KW-0732">Signal</keyword>
<keyword id="KW-0843">Virulence</keyword>
<reference key="1">
    <citation type="journal article" date="2005" name="Nature">
        <title>Genomic sequence of the pathogenic and allergenic filamentous fungus Aspergillus fumigatus.</title>
        <authorList>
            <person name="Nierman W.C."/>
            <person name="Pain A."/>
            <person name="Anderson M.J."/>
            <person name="Wortman J.R."/>
            <person name="Kim H.S."/>
            <person name="Arroyo J."/>
            <person name="Berriman M."/>
            <person name="Abe K."/>
            <person name="Archer D.B."/>
            <person name="Bermejo C."/>
            <person name="Bennett J.W."/>
            <person name="Bowyer P."/>
            <person name="Chen D."/>
            <person name="Collins M."/>
            <person name="Coulsen R."/>
            <person name="Davies R."/>
            <person name="Dyer P.S."/>
            <person name="Farman M.L."/>
            <person name="Fedorova N."/>
            <person name="Fedorova N.D."/>
            <person name="Feldblyum T.V."/>
            <person name="Fischer R."/>
            <person name="Fosker N."/>
            <person name="Fraser A."/>
            <person name="Garcia J.L."/>
            <person name="Garcia M.J."/>
            <person name="Goble A."/>
            <person name="Goldman G.H."/>
            <person name="Gomi K."/>
            <person name="Griffith-Jones S."/>
            <person name="Gwilliam R."/>
            <person name="Haas B.J."/>
            <person name="Haas H."/>
            <person name="Harris D.E."/>
            <person name="Horiuchi H."/>
            <person name="Huang J."/>
            <person name="Humphray S."/>
            <person name="Jimenez J."/>
            <person name="Keller N."/>
            <person name="Khouri H."/>
            <person name="Kitamoto K."/>
            <person name="Kobayashi T."/>
            <person name="Konzack S."/>
            <person name="Kulkarni R."/>
            <person name="Kumagai T."/>
            <person name="Lafton A."/>
            <person name="Latge J.-P."/>
            <person name="Li W."/>
            <person name="Lord A."/>
            <person name="Lu C."/>
            <person name="Majoros W.H."/>
            <person name="May G.S."/>
            <person name="Miller B.L."/>
            <person name="Mohamoud Y."/>
            <person name="Molina M."/>
            <person name="Monod M."/>
            <person name="Mouyna I."/>
            <person name="Mulligan S."/>
            <person name="Murphy L.D."/>
            <person name="O'Neil S."/>
            <person name="Paulsen I."/>
            <person name="Penalva M.A."/>
            <person name="Pertea M."/>
            <person name="Price C."/>
            <person name="Pritchard B.L."/>
            <person name="Quail M.A."/>
            <person name="Rabbinowitsch E."/>
            <person name="Rawlins N."/>
            <person name="Rajandream M.A."/>
            <person name="Reichard U."/>
            <person name="Renauld H."/>
            <person name="Robson G.D."/>
            <person name="Rodriguez de Cordoba S."/>
            <person name="Rodriguez-Pena J.M."/>
            <person name="Ronning C.M."/>
            <person name="Rutter S."/>
            <person name="Salzberg S.L."/>
            <person name="Sanchez M."/>
            <person name="Sanchez-Ferrero J.C."/>
            <person name="Saunders D."/>
            <person name="Seeger K."/>
            <person name="Squares R."/>
            <person name="Squares S."/>
            <person name="Takeuchi M."/>
            <person name="Tekaia F."/>
            <person name="Turner G."/>
            <person name="Vazquez de Aldana C.R."/>
            <person name="Weidman J."/>
            <person name="White O."/>
            <person name="Woodward J.R."/>
            <person name="Yu J.-H."/>
            <person name="Fraser C.M."/>
            <person name="Galagan J.E."/>
            <person name="Asai K."/>
            <person name="Machida M."/>
            <person name="Hall N."/>
            <person name="Barrell B.G."/>
            <person name="Denning D.W."/>
        </authorList>
    </citation>
    <scope>NUCLEOTIDE SEQUENCE [LARGE SCALE GENOMIC DNA]</scope>
    <source>
        <strain>ATCC MYA-4609 / CBS 101355 / FGSC A1100 / Af293</strain>
    </source>
</reference>
<protein>
    <recommendedName>
        <fullName>Probable dipeptidyl peptidase 4</fullName>
        <ecNumber>3.4.14.5</ecNumber>
    </recommendedName>
    <alternativeName>
        <fullName>Dipeptidyl peptidase IV</fullName>
        <shortName>DPP IV</shortName>
        <shortName>DppIV</shortName>
    </alternativeName>
</protein>
<comment type="function">
    <text evidence="1">Extracellular dipeptidyl-peptidase which removes N-terminal dipeptides sequentially from polypeptides having unsubstituted N-termini provided that the penultimate residue is proline. Contributes to pathogenicity (By similarity).</text>
</comment>
<comment type="catalytic activity">
    <reaction>
        <text>Release of an N-terminal dipeptide, Xaa-Yaa-|-Zaa-, from a polypeptide, preferentially when Yaa is Pro, provided Zaa is neither Pro nor hydroxyproline.</text>
        <dbReference type="EC" id="3.4.14.5"/>
    </reaction>
</comment>
<comment type="subcellular location">
    <subcellularLocation>
        <location evidence="1">Secreted</location>
    </subcellularLocation>
</comment>
<comment type="similarity">
    <text evidence="3">Belongs to the peptidase S9B family.</text>
</comment>
<proteinExistence type="inferred from homology"/>
<gene>
    <name type="primary">dpp4</name>
    <name type="ORF">AFUA_4G09320</name>
</gene>
<feature type="signal peptide" evidence="2">
    <location>
        <begin position="1"/>
        <end position="14"/>
    </location>
</feature>
<feature type="chain" id="PRO_0000397812" description="Probable dipeptidyl peptidase 4">
    <location>
        <begin position="15"/>
        <end position="765"/>
    </location>
</feature>
<feature type="active site" description="Charge relay system" evidence="1">
    <location>
        <position position="613"/>
    </location>
</feature>
<feature type="active site" description="Charge relay system" evidence="1">
    <location>
        <position position="690"/>
    </location>
</feature>
<feature type="active site" description="Charge relay system" evidence="1">
    <location>
        <position position="725"/>
    </location>
</feature>
<feature type="glycosylation site" description="N-linked (GlcNAc...) asparagine" evidence="2">
    <location>
        <position position="35"/>
    </location>
</feature>
<feature type="glycosylation site" description="N-linked (GlcNAc...) asparagine" evidence="2">
    <location>
        <position position="78"/>
    </location>
</feature>
<feature type="glycosylation site" description="N-linked (GlcNAc...) asparagine" evidence="2">
    <location>
        <position position="101"/>
    </location>
</feature>
<feature type="glycosylation site" description="N-linked (GlcNAc...) asparagine" evidence="2">
    <location>
        <position position="110"/>
    </location>
</feature>
<feature type="glycosylation site" description="N-linked (GlcNAc...) asparagine" evidence="2">
    <location>
        <position position="169"/>
    </location>
</feature>
<feature type="glycosylation site" description="N-linked (GlcNAc...) asparagine" evidence="2">
    <location>
        <position position="218"/>
    </location>
</feature>
<feature type="glycosylation site" description="N-linked (GlcNAc...) asparagine" evidence="2">
    <location>
        <position position="465"/>
    </location>
</feature>
<feature type="glycosylation site" description="N-linked (GlcNAc...) asparagine" evidence="2">
    <location>
        <position position="490"/>
    </location>
</feature>
<feature type="glycosylation site" description="N-linked (GlcNAc...) asparagine" evidence="2">
    <location>
        <position position="665"/>
    </location>
</feature>
<name>DPP4_ASPFU</name>
<accession>Q4WPH9</accession>
<evidence type="ECO:0000250" key="1"/>
<evidence type="ECO:0000255" key="2"/>
<evidence type="ECO:0000305" key="3"/>
<sequence>MKWSILLLVGCAAAIDVPRQPYAPTGSGKKRLTFNETVVKRAISPSAISVEWISTSEDGDYVYQDQDGSLKIQSIVTNHTQTLVPADKVPEDAYSYWIHPNLSSVLWATNYTKQYRHSYFADYFIQDVQSMKLRPLAPDQSGDIQYAQWTPTGDAIAFVRDNNVFVWTNASTSQITNDGGPDLFNGVPDWIYEEEILGDRFALWFSPDGAYLAFLRFNETGVPTFTVPYYMDNEEIAPPYPRELELRYPKVSQTNPTVELNLLELRTGERTPVPIDAFDAKELIIGEVAWLTGKHDVVAVKAFNRVQDRQKVVAVDVASLRSKTISERDGTDGWLDNLLSMAYIGPIGESKEEYYIDISDQSGWAHLWLFPVAGGEPIALTKGEWEVTNILSIDKPRQLVYFLSTKHHSTERHLYSVSWKTKEITPLVDDTVPAVWSASFSSQGGYYILSYRGPDVPYQDLYAINSTAPLRTITSNAAVLNALKEYTLPNITYFELALPSGETLNVMQRLPVKFSPKKKYPVLFTPYGGPGAQEVSKAWQALDFKAYIASDPELEYITWTVDNRGTGYKGRAFRCQVASRLGELEAADQVFAAQQAAKLPYVDAQHIAIWGWSYGGYLTGKVIETDSGAFSLGVQTAPVSDWRFYDSMYTERYMKTLESNAAGYNASAIRKVAGYKNVRGGVLIQHGTGDDNVHFQNAAALVDTLVGAGVTPEKLQVQWFTDSDHGIRYHGGNVFLYRQLSKRLYEEKKRKEKGEAHQWSKKSVL</sequence>
<organism>
    <name type="scientific">Aspergillus fumigatus (strain ATCC MYA-4609 / CBS 101355 / FGSC A1100 / Af293)</name>
    <name type="common">Neosartorya fumigata</name>
    <dbReference type="NCBI Taxonomy" id="330879"/>
    <lineage>
        <taxon>Eukaryota</taxon>
        <taxon>Fungi</taxon>
        <taxon>Dikarya</taxon>
        <taxon>Ascomycota</taxon>
        <taxon>Pezizomycotina</taxon>
        <taxon>Eurotiomycetes</taxon>
        <taxon>Eurotiomycetidae</taxon>
        <taxon>Eurotiales</taxon>
        <taxon>Aspergillaceae</taxon>
        <taxon>Aspergillus</taxon>
        <taxon>Aspergillus subgen. Fumigati</taxon>
    </lineage>
</organism>
<dbReference type="EC" id="3.4.14.5"/>
<dbReference type="EMBL" id="AAHF01000005">
    <property type="protein sequence ID" value="EAL89855.1"/>
    <property type="molecule type" value="Genomic_DNA"/>
</dbReference>
<dbReference type="RefSeq" id="XP_751893.1">
    <property type="nucleotide sequence ID" value="XM_746800.1"/>
</dbReference>
<dbReference type="SMR" id="Q4WPH9"/>
<dbReference type="STRING" id="330879.Q4WPH9"/>
<dbReference type="ESTHER" id="aspfu-DPP4">
    <property type="family name" value="DPP4N_Peptidase_S9"/>
</dbReference>
<dbReference type="MEROPS" id="S09.008"/>
<dbReference type="GlyCosmos" id="Q4WPH9">
    <property type="glycosylation" value="9 sites, No reported glycans"/>
</dbReference>
<dbReference type="EnsemblFungi" id="EAL89855">
    <property type="protein sequence ID" value="EAL89855"/>
    <property type="gene ID" value="AFUA_4G09320"/>
</dbReference>
<dbReference type="GeneID" id="3509739"/>
<dbReference type="KEGG" id="afm:AFUA_4G09320"/>
<dbReference type="VEuPathDB" id="FungiDB:Afu4g09320"/>
<dbReference type="eggNOG" id="KOG2100">
    <property type="taxonomic scope" value="Eukaryota"/>
</dbReference>
<dbReference type="HOGENOM" id="CLU_006105_0_2_1"/>
<dbReference type="InParanoid" id="Q4WPH9"/>
<dbReference type="OMA" id="YTSTEHH"/>
<dbReference type="OrthoDB" id="16520at2759"/>
<dbReference type="Proteomes" id="UP000002530">
    <property type="component" value="Chromosome 4"/>
</dbReference>
<dbReference type="GO" id="GO:0005576">
    <property type="term" value="C:extracellular region"/>
    <property type="evidence" value="ECO:0007669"/>
    <property type="project" value="UniProtKB-SubCell"/>
</dbReference>
<dbReference type="GO" id="GO:0005886">
    <property type="term" value="C:plasma membrane"/>
    <property type="evidence" value="ECO:0000318"/>
    <property type="project" value="GO_Central"/>
</dbReference>
<dbReference type="GO" id="GO:0004177">
    <property type="term" value="F:aminopeptidase activity"/>
    <property type="evidence" value="ECO:0007669"/>
    <property type="project" value="UniProtKB-KW"/>
</dbReference>
<dbReference type="GO" id="GO:0008239">
    <property type="term" value="F:dipeptidyl-peptidase activity"/>
    <property type="evidence" value="ECO:0000318"/>
    <property type="project" value="GO_Central"/>
</dbReference>
<dbReference type="GO" id="GO:0008233">
    <property type="term" value="F:peptidase activity"/>
    <property type="evidence" value="ECO:0000314"/>
    <property type="project" value="AspGD"/>
</dbReference>
<dbReference type="GO" id="GO:0008236">
    <property type="term" value="F:serine-type peptidase activity"/>
    <property type="evidence" value="ECO:0007669"/>
    <property type="project" value="UniProtKB-KW"/>
</dbReference>
<dbReference type="GO" id="GO:0006508">
    <property type="term" value="P:proteolysis"/>
    <property type="evidence" value="ECO:0000318"/>
    <property type="project" value="GO_Central"/>
</dbReference>
<dbReference type="FunFam" id="3.40.50.1820:FF:000003">
    <property type="entry name" value="Dipeptidyl peptidase 4"/>
    <property type="match status" value="1"/>
</dbReference>
<dbReference type="FunFam" id="2.140.10.30:FF:000003">
    <property type="entry name" value="Probable dipeptidyl peptidase 4"/>
    <property type="match status" value="1"/>
</dbReference>
<dbReference type="Gene3D" id="3.40.50.1820">
    <property type="entry name" value="alpha/beta hydrolase"/>
    <property type="match status" value="1"/>
</dbReference>
<dbReference type="Gene3D" id="2.140.10.30">
    <property type="entry name" value="Dipeptidylpeptidase IV, N-terminal domain"/>
    <property type="match status" value="1"/>
</dbReference>
<dbReference type="InterPro" id="IPR029058">
    <property type="entry name" value="AB_hydrolase_fold"/>
</dbReference>
<dbReference type="InterPro" id="IPR001375">
    <property type="entry name" value="Peptidase_S9_cat"/>
</dbReference>
<dbReference type="InterPro" id="IPR002469">
    <property type="entry name" value="Peptidase_S9B_N"/>
</dbReference>
<dbReference type="InterPro" id="IPR050278">
    <property type="entry name" value="Serine_Prot_S9B/DPPIV"/>
</dbReference>
<dbReference type="PANTHER" id="PTHR11731:SF162">
    <property type="entry name" value="DIPEPTIDYL PEPTIDASE 4-RELATED"/>
    <property type="match status" value="1"/>
</dbReference>
<dbReference type="PANTHER" id="PTHR11731">
    <property type="entry name" value="PROTEASE FAMILY S9B,C DIPEPTIDYL-PEPTIDASE IV-RELATED"/>
    <property type="match status" value="1"/>
</dbReference>
<dbReference type="Pfam" id="PF00930">
    <property type="entry name" value="DPPIV_N"/>
    <property type="match status" value="1"/>
</dbReference>
<dbReference type="Pfam" id="PF00326">
    <property type="entry name" value="Peptidase_S9"/>
    <property type="match status" value="1"/>
</dbReference>
<dbReference type="SUPFAM" id="SSF53474">
    <property type="entry name" value="alpha/beta-Hydrolases"/>
    <property type="match status" value="1"/>
</dbReference>
<dbReference type="SUPFAM" id="SSF82171">
    <property type="entry name" value="DPP6 N-terminal domain-like"/>
    <property type="match status" value="1"/>
</dbReference>